<dbReference type="EMBL" id="AE001439">
    <property type="protein sequence ID" value="AAD06833.1"/>
    <property type="molecule type" value="Genomic_DNA"/>
</dbReference>
<dbReference type="PIR" id="F71829">
    <property type="entry name" value="F71829"/>
</dbReference>
<dbReference type="RefSeq" id="WP_000703806.1">
    <property type="nucleotide sequence ID" value="NC_000921.1"/>
</dbReference>
<dbReference type="SMR" id="Q9ZJP4"/>
<dbReference type="KEGG" id="hpj:jhp_1260"/>
<dbReference type="PATRIC" id="fig|85963.30.peg.1311"/>
<dbReference type="eggNOG" id="COG0810">
    <property type="taxonomic scope" value="Bacteria"/>
</dbReference>
<dbReference type="Proteomes" id="UP000000804">
    <property type="component" value="Chromosome"/>
</dbReference>
<dbReference type="GO" id="GO:0030288">
    <property type="term" value="C:outer membrane-bounded periplasmic space"/>
    <property type="evidence" value="ECO:0007669"/>
    <property type="project" value="InterPro"/>
</dbReference>
<dbReference type="GO" id="GO:0098797">
    <property type="term" value="C:plasma membrane protein complex"/>
    <property type="evidence" value="ECO:0007669"/>
    <property type="project" value="TreeGrafter"/>
</dbReference>
<dbReference type="GO" id="GO:0031992">
    <property type="term" value="F:energy transducer activity"/>
    <property type="evidence" value="ECO:0007669"/>
    <property type="project" value="InterPro"/>
</dbReference>
<dbReference type="GO" id="GO:0015031">
    <property type="term" value="P:protein transport"/>
    <property type="evidence" value="ECO:0007669"/>
    <property type="project" value="UniProtKB-KW"/>
</dbReference>
<dbReference type="GO" id="GO:0015891">
    <property type="term" value="P:siderophore transport"/>
    <property type="evidence" value="ECO:0007669"/>
    <property type="project" value="InterPro"/>
</dbReference>
<dbReference type="GO" id="GO:0055085">
    <property type="term" value="P:transmembrane transport"/>
    <property type="evidence" value="ECO:0007669"/>
    <property type="project" value="InterPro"/>
</dbReference>
<dbReference type="FunFam" id="3.30.1150.10:FF:000015">
    <property type="entry name" value="Protein TonB"/>
    <property type="match status" value="1"/>
</dbReference>
<dbReference type="Gene3D" id="3.30.1150.10">
    <property type="match status" value="1"/>
</dbReference>
<dbReference type="InterPro" id="IPR003538">
    <property type="entry name" value="TonB"/>
</dbReference>
<dbReference type="InterPro" id="IPR051045">
    <property type="entry name" value="TonB-dependent_transducer"/>
</dbReference>
<dbReference type="InterPro" id="IPR006260">
    <property type="entry name" value="TonB/TolA_C"/>
</dbReference>
<dbReference type="InterPro" id="IPR037682">
    <property type="entry name" value="TonB_C"/>
</dbReference>
<dbReference type="NCBIfam" id="TIGR01352">
    <property type="entry name" value="tonB_Cterm"/>
    <property type="match status" value="1"/>
</dbReference>
<dbReference type="PANTHER" id="PTHR33446:SF2">
    <property type="entry name" value="PROTEIN TONB"/>
    <property type="match status" value="1"/>
</dbReference>
<dbReference type="PANTHER" id="PTHR33446">
    <property type="entry name" value="PROTEIN TONB-RELATED"/>
    <property type="match status" value="1"/>
</dbReference>
<dbReference type="Pfam" id="PF03544">
    <property type="entry name" value="TonB_C"/>
    <property type="match status" value="1"/>
</dbReference>
<dbReference type="PRINTS" id="PR01374">
    <property type="entry name" value="TONBPROTEIN"/>
</dbReference>
<dbReference type="SUPFAM" id="SSF74653">
    <property type="entry name" value="TolA/TonB C-terminal domain"/>
    <property type="match status" value="1"/>
</dbReference>
<dbReference type="PROSITE" id="PS52015">
    <property type="entry name" value="TONB_CTD"/>
    <property type="match status" value="1"/>
</dbReference>
<feature type="chain" id="PRO_0000196199" description="Protein TonB">
    <location>
        <begin position="1"/>
        <end position="280"/>
    </location>
</feature>
<feature type="topological domain" description="Cytoplasmic" evidence="2">
    <location>
        <begin position="1"/>
        <end position="14"/>
    </location>
</feature>
<feature type="transmembrane region" description="Helical; Signal-anchor" evidence="2">
    <location>
        <begin position="15"/>
        <end position="35"/>
    </location>
</feature>
<feature type="topological domain" description="Periplasmic" evidence="2">
    <location>
        <begin position="36"/>
        <end position="280"/>
    </location>
</feature>
<feature type="domain" description="TonB C-terminal" evidence="3">
    <location>
        <begin position="191"/>
        <end position="280"/>
    </location>
</feature>
<feature type="region of interest" description="Disordered" evidence="4">
    <location>
        <begin position="56"/>
        <end position="184"/>
    </location>
</feature>
<feature type="compositionally biased region" description="Polar residues" evidence="4">
    <location>
        <begin position="56"/>
        <end position="69"/>
    </location>
</feature>
<feature type="compositionally biased region" description="Basic and acidic residues" evidence="4">
    <location>
        <begin position="71"/>
        <end position="97"/>
    </location>
</feature>
<feature type="compositionally biased region" description="Basic residues" evidence="4">
    <location>
        <begin position="98"/>
        <end position="112"/>
    </location>
</feature>
<feature type="compositionally biased region" description="Basic and acidic residues" evidence="4">
    <location>
        <begin position="113"/>
        <end position="151"/>
    </location>
</feature>
<feature type="compositionally biased region" description="Basic and acidic residues" evidence="4">
    <location>
        <begin position="159"/>
        <end position="172"/>
    </location>
</feature>
<feature type="compositionally biased region" description="Polar residues" evidence="4">
    <location>
        <begin position="173"/>
        <end position="182"/>
    </location>
</feature>
<gene>
    <name type="primary">tonB</name>
    <name type="ordered locus">jhp_1260</name>
</gene>
<proteinExistence type="inferred from homology"/>
<name>TONB_HELPJ</name>
<accession>Q9ZJP4</accession>
<organism>
    <name type="scientific">Helicobacter pylori (strain J99 / ATCC 700824)</name>
    <name type="common">Campylobacter pylori J99</name>
    <dbReference type="NCBI Taxonomy" id="85963"/>
    <lineage>
        <taxon>Bacteria</taxon>
        <taxon>Pseudomonadati</taxon>
        <taxon>Campylobacterota</taxon>
        <taxon>Epsilonproteobacteria</taxon>
        <taxon>Campylobacterales</taxon>
        <taxon>Helicobacteraceae</taxon>
        <taxon>Helicobacter</taxon>
    </lineage>
</organism>
<evidence type="ECO:0000250" key="1"/>
<evidence type="ECO:0000255" key="2"/>
<evidence type="ECO:0000255" key="3">
    <source>
        <dbReference type="PROSITE-ProRule" id="PRU01359"/>
    </source>
</evidence>
<evidence type="ECO:0000256" key="4">
    <source>
        <dbReference type="SAM" id="MobiDB-lite"/>
    </source>
</evidence>
<evidence type="ECO:0000305" key="5"/>
<sequence length="280" mass="31046">MKISPSPRKLSKVSTSVSFLISFALYAIGFGYFLLREDAPEPLAQAGTTKVTMSLASINTNSNTKTNAESAKPKEEPKEKPKKEEPKKEEPKKETKPKPKPKPKPKPKPKPKPKPEPKPKPEPKVEEPKKEEPKEEPKKEEAKEEAKEKSVPKQVTTKDIVKEKDKQEESNKTSEGATSEAQAYNPGVSNEFLMKIQTAISSKNRYPKMAQIRGIEGEVLVSFTINADGSVTDIKVVKSNTTDILNHAALEAIKSAAHLFPKPDETVHLKIPIAYSLKED</sequence>
<protein>
    <recommendedName>
        <fullName>Protein TonB</fullName>
    </recommendedName>
</protein>
<comment type="function">
    <text evidence="1">Interacts with outer membrane receptor proteins that carry out high-affinity binding and energy dependent uptake into the periplasmic space of specific substrates. It could act to transduce energy from the cytoplasmic membrane to specific energy-requiring processes in the outer membrane, resulting in the release into the periplasm of ligands bound by these outer membrane proteins (By similarity).</text>
</comment>
<comment type="subcellular location">
    <subcellularLocation>
        <location evidence="1">Cell inner membrane</location>
        <topology evidence="1">Single-pass membrane protein</topology>
        <orientation evidence="1">Periplasmic side</orientation>
    </subcellularLocation>
</comment>
<comment type="similarity">
    <text evidence="5">Belongs to the TonB family.</text>
</comment>
<reference key="1">
    <citation type="journal article" date="1999" name="Nature">
        <title>Genomic sequence comparison of two unrelated isolates of the human gastric pathogen Helicobacter pylori.</title>
        <authorList>
            <person name="Alm R.A."/>
            <person name="Ling L.-S.L."/>
            <person name="Moir D.T."/>
            <person name="King B.L."/>
            <person name="Brown E.D."/>
            <person name="Doig P.C."/>
            <person name="Smith D.R."/>
            <person name="Noonan B."/>
            <person name="Guild B.C."/>
            <person name="deJonge B.L."/>
            <person name="Carmel G."/>
            <person name="Tummino P.J."/>
            <person name="Caruso A."/>
            <person name="Uria-Nickelsen M."/>
            <person name="Mills D.M."/>
            <person name="Ives C."/>
            <person name="Gibson R."/>
            <person name="Merberg D."/>
            <person name="Mills S.D."/>
            <person name="Jiang Q."/>
            <person name="Taylor D.E."/>
            <person name="Vovis G.F."/>
            <person name="Trust T.J."/>
        </authorList>
    </citation>
    <scope>NUCLEOTIDE SEQUENCE [LARGE SCALE GENOMIC DNA]</scope>
    <source>
        <strain>J99 / ATCC 700824</strain>
    </source>
</reference>
<keyword id="KW-0997">Cell inner membrane</keyword>
<keyword id="KW-1003">Cell membrane</keyword>
<keyword id="KW-0472">Membrane</keyword>
<keyword id="KW-0653">Protein transport</keyword>
<keyword id="KW-0677">Repeat</keyword>
<keyword id="KW-0735">Signal-anchor</keyword>
<keyword id="KW-0812">Transmembrane</keyword>
<keyword id="KW-1133">Transmembrane helix</keyword>
<keyword id="KW-0813">Transport</keyword>